<protein>
    <recommendedName>
        <fullName evidence="1">Probable GTP-binding protein EngB</fullName>
    </recommendedName>
</protein>
<feature type="chain" id="PRO_1000115982" description="Probable GTP-binding protein EngB">
    <location>
        <begin position="1"/>
        <end position="198"/>
    </location>
</feature>
<feature type="domain" description="EngB-type G" evidence="1">
    <location>
        <begin position="22"/>
        <end position="195"/>
    </location>
</feature>
<feature type="binding site" evidence="1">
    <location>
        <begin position="30"/>
        <end position="37"/>
    </location>
    <ligand>
        <name>GTP</name>
        <dbReference type="ChEBI" id="CHEBI:37565"/>
    </ligand>
</feature>
<feature type="binding site" evidence="1">
    <location>
        <position position="37"/>
    </location>
    <ligand>
        <name>Mg(2+)</name>
        <dbReference type="ChEBI" id="CHEBI:18420"/>
    </ligand>
</feature>
<feature type="binding site" evidence="1">
    <location>
        <begin position="57"/>
        <end position="61"/>
    </location>
    <ligand>
        <name>GTP</name>
        <dbReference type="ChEBI" id="CHEBI:37565"/>
    </ligand>
</feature>
<feature type="binding site" evidence="1">
    <location>
        <position position="59"/>
    </location>
    <ligand>
        <name>Mg(2+)</name>
        <dbReference type="ChEBI" id="CHEBI:18420"/>
    </ligand>
</feature>
<feature type="binding site" evidence="1">
    <location>
        <begin position="75"/>
        <end position="78"/>
    </location>
    <ligand>
        <name>GTP</name>
        <dbReference type="ChEBI" id="CHEBI:37565"/>
    </ligand>
</feature>
<feature type="binding site" evidence="1">
    <location>
        <begin position="142"/>
        <end position="145"/>
    </location>
    <ligand>
        <name>GTP</name>
        <dbReference type="ChEBI" id="CHEBI:37565"/>
    </ligand>
</feature>
<feature type="binding site" evidence="1">
    <location>
        <begin position="174"/>
        <end position="176"/>
    </location>
    <ligand>
        <name>GTP</name>
        <dbReference type="ChEBI" id="CHEBI:37565"/>
    </ligand>
</feature>
<sequence length="198" mass="22216">MDVHDVKLTISAVAAAQYPEDGHPEIAFLGRSNVGKSSLINKLIQRKAMARTSGVPGKTQTLNFYDLDSRLFFVDVPGYGYAKVSKTARAKFAAMIETYLTTRQPLRGVVLLVDSRHEPTADDISMYQYLKYYQLRTLVVATKIDKTPKSKRLHVAKQIKQRLDLNQTDDVILFSATTGEGYEAVWSWLEQTAGLEGR</sequence>
<dbReference type="EMBL" id="FM177140">
    <property type="protein sequence ID" value="CAQ66643.1"/>
    <property type="molecule type" value="Genomic_DNA"/>
</dbReference>
<dbReference type="SMR" id="B3WE42"/>
<dbReference type="KEGG" id="lcb:LCABL_15620"/>
<dbReference type="HOGENOM" id="CLU_033732_3_0_9"/>
<dbReference type="GO" id="GO:0005829">
    <property type="term" value="C:cytosol"/>
    <property type="evidence" value="ECO:0007669"/>
    <property type="project" value="TreeGrafter"/>
</dbReference>
<dbReference type="GO" id="GO:0005525">
    <property type="term" value="F:GTP binding"/>
    <property type="evidence" value="ECO:0007669"/>
    <property type="project" value="UniProtKB-UniRule"/>
</dbReference>
<dbReference type="GO" id="GO:0046872">
    <property type="term" value="F:metal ion binding"/>
    <property type="evidence" value="ECO:0007669"/>
    <property type="project" value="UniProtKB-KW"/>
</dbReference>
<dbReference type="GO" id="GO:0000917">
    <property type="term" value="P:division septum assembly"/>
    <property type="evidence" value="ECO:0007669"/>
    <property type="project" value="UniProtKB-KW"/>
</dbReference>
<dbReference type="CDD" id="cd01876">
    <property type="entry name" value="YihA_EngB"/>
    <property type="match status" value="1"/>
</dbReference>
<dbReference type="FunFam" id="3.40.50.300:FF:000098">
    <property type="entry name" value="Probable GTP-binding protein EngB"/>
    <property type="match status" value="1"/>
</dbReference>
<dbReference type="Gene3D" id="3.40.50.300">
    <property type="entry name" value="P-loop containing nucleotide triphosphate hydrolases"/>
    <property type="match status" value="1"/>
</dbReference>
<dbReference type="HAMAP" id="MF_00321">
    <property type="entry name" value="GTPase_EngB"/>
    <property type="match status" value="1"/>
</dbReference>
<dbReference type="InterPro" id="IPR030393">
    <property type="entry name" value="G_ENGB_dom"/>
</dbReference>
<dbReference type="InterPro" id="IPR006073">
    <property type="entry name" value="GTP-bd"/>
</dbReference>
<dbReference type="InterPro" id="IPR019987">
    <property type="entry name" value="GTP-bd_ribosome_bio_YsxC"/>
</dbReference>
<dbReference type="InterPro" id="IPR027417">
    <property type="entry name" value="P-loop_NTPase"/>
</dbReference>
<dbReference type="InterPro" id="IPR005225">
    <property type="entry name" value="Small_GTP-bd"/>
</dbReference>
<dbReference type="NCBIfam" id="TIGR03598">
    <property type="entry name" value="GTPase_YsxC"/>
    <property type="match status" value="1"/>
</dbReference>
<dbReference type="NCBIfam" id="TIGR00231">
    <property type="entry name" value="small_GTP"/>
    <property type="match status" value="1"/>
</dbReference>
<dbReference type="PANTHER" id="PTHR11649:SF13">
    <property type="entry name" value="ENGB-TYPE G DOMAIN-CONTAINING PROTEIN"/>
    <property type="match status" value="1"/>
</dbReference>
<dbReference type="PANTHER" id="PTHR11649">
    <property type="entry name" value="MSS1/TRME-RELATED GTP-BINDING PROTEIN"/>
    <property type="match status" value="1"/>
</dbReference>
<dbReference type="Pfam" id="PF01926">
    <property type="entry name" value="MMR_HSR1"/>
    <property type="match status" value="1"/>
</dbReference>
<dbReference type="SUPFAM" id="SSF52540">
    <property type="entry name" value="P-loop containing nucleoside triphosphate hydrolases"/>
    <property type="match status" value="1"/>
</dbReference>
<dbReference type="PROSITE" id="PS51706">
    <property type="entry name" value="G_ENGB"/>
    <property type="match status" value="1"/>
</dbReference>
<gene>
    <name evidence="1" type="primary">engB</name>
    <name type="ordered locus">LCABL_15620</name>
</gene>
<reference key="1">
    <citation type="submission" date="2008-06" db="EMBL/GenBank/DDBJ databases">
        <title>Lactobacillus casei BL23 complete genome sequence.</title>
        <authorList>
            <person name="Maze A."/>
            <person name="Boel G."/>
            <person name="Bourand A."/>
            <person name="Loux V."/>
            <person name="Gibrat J.F."/>
            <person name="Zuniga M."/>
            <person name="Hartke A."/>
            <person name="Deutscher J."/>
        </authorList>
    </citation>
    <scope>NUCLEOTIDE SEQUENCE [LARGE SCALE GENOMIC DNA]</scope>
    <source>
        <strain>BL23</strain>
    </source>
</reference>
<evidence type="ECO:0000255" key="1">
    <source>
        <dbReference type="HAMAP-Rule" id="MF_00321"/>
    </source>
</evidence>
<comment type="function">
    <text evidence="1">Necessary for normal cell division and for the maintenance of normal septation.</text>
</comment>
<comment type="cofactor">
    <cofactor evidence="1">
        <name>Mg(2+)</name>
        <dbReference type="ChEBI" id="CHEBI:18420"/>
    </cofactor>
</comment>
<comment type="similarity">
    <text evidence="1">Belongs to the TRAFAC class TrmE-Era-EngA-EngB-Septin-like GTPase superfamily. EngB GTPase family.</text>
</comment>
<organism>
    <name type="scientific">Lacticaseibacillus casei (strain BL23)</name>
    <name type="common">Lactobacillus casei</name>
    <dbReference type="NCBI Taxonomy" id="543734"/>
    <lineage>
        <taxon>Bacteria</taxon>
        <taxon>Bacillati</taxon>
        <taxon>Bacillota</taxon>
        <taxon>Bacilli</taxon>
        <taxon>Lactobacillales</taxon>
        <taxon>Lactobacillaceae</taxon>
        <taxon>Lacticaseibacillus</taxon>
    </lineage>
</organism>
<name>ENGB_LACCB</name>
<accession>B3WE42</accession>
<proteinExistence type="inferred from homology"/>
<keyword id="KW-0131">Cell cycle</keyword>
<keyword id="KW-0132">Cell division</keyword>
<keyword id="KW-0342">GTP-binding</keyword>
<keyword id="KW-0460">Magnesium</keyword>
<keyword id="KW-0479">Metal-binding</keyword>
<keyword id="KW-0547">Nucleotide-binding</keyword>
<keyword id="KW-0717">Septation</keyword>